<gene>
    <name type="primary">MANEAL</name>
</gene>
<evidence type="ECO:0000250" key="1"/>
<evidence type="ECO:0000255" key="2"/>
<evidence type="ECO:0000256" key="3">
    <source>
        <dbReference type="SAM" id="MobiDB-lite"/>
    </source>
</evidence>
<evidence type="ECO:0000303" key="4">
    <source>
    </source>
</evidence>
<evidence type="ECO:0000303" key="5">
    <source>
    </source>
</evidence>
<evidence type="ECO:0000305" key="6"/>
<proteinExistence type="evidence at protein level"/>
<comment type="subcellular location">
    <subcellularLocation>
        <location evidence="1">Golgi apparatus membrane</location>
        <topology evidence="1">Single-pass type II membrane protein</topology>
    </subcellularLocation>
</comment>
<comment type="alternative products">
    <event type="alternative splicing"/>
    <isoform>
        <id>Q5VSG8-1</id>
        <name>1</name>
        <sequence type="displayed"/>
    </isoform>
    <isoform>
        <id>Q5VSG8-2</id>
        <name>2</name>
        <sequence type="described" ref="VSP_024116 VSP_024117"/>
    </isoform>
    <isoform>
        <id>Q5VSG8-3</id>
        <name>3</name>
        <sequence type="described" ref="VSP_024118 VSP_024119"/>
    </isoform>
</comment>
<comment type="similarity">
    <text evidence="6">Belongs to the glycosyl hydrolase 99 family.</text>
</comment>
<dbReference type="EC" id="3.2.1.-"/>
<dbReference type="EMBL" id="AK055996">
    <property type="protein sequence ID" value="BAB71068.1"/>
    <property type="molecule type" value="mRNA"/>
</dbReference>
<dbReference type="EMBL" id="AL929472">
    <property type="status" value="NOT_ANNOTATED_CDS"/>
    <property type="molecule type" value="Genomic_DNA"/>
</dbReference>
<dbReference type="EMBL" id="BC009952">
    <property type="protein sequence ID" value="AAH09952.2"/>
    <property type="molecule type" value="mRNA"/>
</dbReference>
<dbReference type="EMBL" id="BC031903">
    <property type="protein sequence ID" value="AAH31903.1"/>
    <property type="molecule type" value="mRNA"/>
</dbReference>
<dbReference type="EMBL" id="BC063587">
    <property type="protein sequence ID" value="AAH63587.1"/>
    <property type="molecule type" value="mRNA"/>
</dbReference>
<dbReference type="EMBL" id="BC077730">
    <property type="protein sequence ID" value="AAH77730.1"/>
    <property type="molecule type" value="mRNA"/>
</dbReference>
<dbReference type="CCDS" id="CCDS426.1">
    <molecule id="Q5VSG8-2"/>
</dbReference>
<dbReference type="CCDS" id="CCDS44110.1">
    <molecule id="Q5VSG8-1"/>
</dbReference>
<dbReference type="CCDS" id="CCDS44111.1">
    <molecule id="Q5VSG8-3"/>
</dbReference>
<dbReference type="RefSeq" id="NP_001026910.1">
    <molecule id="Q5VSG8-3"/>
    <property type="nucleotide sequence ID" value="NM_001031740.3"/>
</dbReference>
<dbReference type="RefSeq" id="NP_001106954.1">
    <molecule id="Q5VSG8-1"/>
    <property type="nucleotide sequence ID" value="NM_001113482.2"/>
</dbReference>
<dbReference type="RefSeq" id="NP_689709.1">
    <molecule id="Q5VSG8-2"/>
    <property type="nucleotide sequence ID" value="NM_152496.3"/>
</dbReference>
<dbReference type="RefSeq" id="XP_011539090.1">
    <property type="nucleotide sequence ID" value="XM_011540788.1"/>
</dbReference>
<dbReference type="SMR" id="Q5VSG8"/>
<dbReference type="BioGRID" id="127196">
    <property type="interactions" value="35"/>
</dbReference>
<dbReference type="FunCoup" id="Q5VSG8">
    <property type="interactions" value="709"/>
</dbReference>
<dbReference type="IntAct" id="Q5VSG8">
    <property type="interactions" value="34"/>
</dbReference>
<dbReference type="STRING" id="9606.ENSP00000362136"/>
<dbReference type="CAZy" id="GH99">
    <property type="family name" value="Glycoside Hydrolase Family 99"/>
</dbReference>
<dbReference type="GlyCosmos" id="Q5VSG8">
    <property type="glycosylation" value="1 site, 1 glycan"/>
</dbReference>
<dbReference type="GlyGen" id="Q5VSG8">
    <property type="glycosylation" value="1 site, 1 O-linked glycan (1 site)"/>
</dbReference>
<dbReference type="iPTMnet" id="Q5VSG8"/>
<dbReference type="PhosphoSitePlus" id="Q5VSG8"/>
<dbReference type="BioMuta" id="MANEAL"/>
<dbReference type="DMDM" id="74746792"/>
<dbReference type="jPOST" id="Q5VSG8"/>
<dbReference type="MassIVE" id="Q5VSG8"/>
<dbReference type="PaxDb" id="9606-ENSP00000362136"/>
<dbReference type="PeptideAtlas" id="Q5VSG8"/>
<dbReference type="ProteomicsDB" id="65261">
    <molecule id="Q5VSG8-1"/>
</dbReference>
<dbReference type="ProteomicsDB" id="65262">
    <molecule id="Q5VSG8-2"/>
</dbReference>
<dbReference type="ProteomicsDB" id="65263">
    <molecule id="Q5VSG8-3"/>
</dbReference>
<dbReference type="Pumba" id="Q5VSG8"/>
<dbReference type="Antibodypedia" id="54337">
    <property type="antibodies" value="20 antibodies from 10 providers"/>
</dbReference>
<dbReference type="DNASU" id="149175"/>
<dbReference type="Ensembl" id="ENST00000329006.5">
    <molecule id="Q5VSG8-2"/>
    <property type="protein sequence ID" value="ENSP00000328770.5"/>
    <property type="gene ID" value="ENSG00000185090.15"/>
</dbReference>
<dbReference type="Ensembl" id="ENST00000373045.11">
    <molecule id="Q5VSG8-1"/>
    <property type="protein sequence ID" value="ENSP00000362136.6"/>
    <property type="gene ID" value="ENSG00000185090.15"/>
</dbReference>
<dbReference type="Ensembl" id="ENST00000397631.7">
    <molecule id="Q5VSG8-3"/>
    <property type="protein sequence ID" value="ENSP00000380755.3"/>
    <property type="gene ID" value="ENSG00000185090.15"/>
</dbReference>
<dbReference type="GeneID" id="149175"/>
<dbReference type="KEGG" id="hsa:149175"/>
<dbReference type="MANE-Select" id="ENST00000373045.11">
    <property type="protein sequence ID" value="ENSP00000362136.6"/>
    <property type="RefSeq nucleotide sequence ID" value="NM_001113482.2"/>
    <property type="RefSeq protein sequence ID" value="NP_001106954.1"/>
</dbReference>
<dbReference type="UCSC" id="uc001cbx.3">
    <molecule id="Q5VSG8-1"/>
    <property type="organism name" value="human"/>
</dbReference>
<dbReference type="AGR" id="HGNC:26452"/>
<dbReference type="CTD" id="149175"/>
<dbReference type="DisGeNET" id="149175"/>
<dbReference type="GeneCards" id="MANEAL"/>
<dbReference type="HGNC" id="HGNC:26452">
    <property type="gene designation" value="MANEAL"/>
</dbReference>
<dbReference type="HPA" id="ENSG00000185090">
    <property type="expression patterns" value="Tissue enhanced (brain)"/>
</dbReference>
<dbReference type="MIM" id="620919">
    <property type="type" value="gene"/>
</dbReference>
<dbReference type="neXtProt" id="NX_Q5VSG8"/>
<dbReference type="OpenTargets" id="ENSG00000185090"/>
<dbReference type="PharmGKB" id="PA142671481"/>
<dbReference type="VEuPathDB" id="HostDB:ENSG00000185090"/>
<dbReference type="eggNOG" id="ENOG502QPJV">
    <property type="taxonomic scope" value="Eukaryota"/>
</dbReference>
<dbReference type="GeneTree" id="ENSGT00390000016054"/>
<dbReference type="HOGENOM" id="CLU_042710_1_1_1"/>
<dbReference type="InParanoid" id="Q5VSG8"/>
<dbReference type="OMA" id="VHWDHVM"/>
<dbReference type="OrthoDB" id="406152at2759"/>
<dbReference type="PAN-GO" id="Q5VSG8">
    <property type="GO annotations" value="2 GO annotations based on evolutionary models"/>
</dbReference>
<dbReference type="PhylomeDB" id="Q5VSG8"/>
<dbReference type="TreeFam" id="TF324051"/>
<dbReference type="PathwayCommons" id="Q5VSG8"/>
<dbReference type="SignaLink" id="Q5VSG8"/>
<dbReference type="BioGRID-ORCS" id="149175">
    <property type="hits" value="18 hits in 1155 CRISPR screens"/>
</dbReference>
<dbReference type="ChiTaRS" id="MANEAL">
    <property type="organism name" value="human"/>
</dbReference>
<dbReference type="GenomeRNAi" id="149175"/>
<dbReference type="Pharos" id="Q5VSG8">
    <property type="development level" value="Tdark"/>
</dbReference>
<dbReference type="PRO" id="PR:Q5VSG8"/>
<dbReference type="Proteomes" id="UP000005640">
    <property type="component" value="Chromosome 1"/>
</dbReference>
<dbReference type="RNAct" id="Q5VSG8">
    <property type="molecule type" value="protein"/>
</dbReference>
<dbReference type="Bgee" id="ENSG00000185090">
    <property type="expression patterns" value="Expressed in cortical plate and 129 other cell types or tissues"/>
</dbReference>
<dbReference type="ExpressionAtlas" id="Q5VSG8">
    <property type="expression patterns" value="baseline and differential"/>
</dbReference>
<dbReference type="GO" id="GO:0000139">
    <property type="term" value="C:Golgi membrane"/>
    <property type="evidence" value="ECO:0007669"/>
    <property type="project" value="UniProtKB-SubCell"/>
</dbReference>
<dbReference type="GO" id="GO:0004559">
    <property type="term" value="F:alpha-mannosidase activity"/>
    <property type="evidence" value="ECO:0000318"/>
    <property type="project" value="GO_Central"/>
</dbReference>
<dbReference type="CDD" id="cd11574">
    <property type="entry name" value="GH99"/>
    <property type="match status" value="1"/>
</dbReference>
<dbReference type="FunFam" id="3.20.20.80:FF:000019">
    <property type="entry name" value="glycoprotein endo-alpha-1,2-mannosidase"/>
    <property type="match status" value="1"/>
</dbReference>
<dbReference type="Gene3D" id="3.20.20.80">
    <property type="entry name" value="Glycosidases"/>
    <property type="match status" value="1"/>
</dbReference>
<dbReference type="InterPro" id="IPR026071">
    <property type="entry name" value="Glyco_Hydrolase_99"/>
</dbReference>
<dbReference type="PANTHER" id="PTHR13572">
    <property type="entry name" value="ENDO-ALPHA-1,2-MANNOSIDASE"/>
    <property type="match status" value="1"/>
</dbReference>
<dbReference type="PANTHER" id="PTHR13572:SF2">
    <property type="entry name" value="GLYCOPROTEIN ENDO-ALPHA-1,2-MANNOSIDASE-LIKE PROTEIN"/>
    <property type="match status" value="1"/>
</dbReference>
<dbReference type="Pfam" id="PF16317">
    <property type="entry name" value="Glyco_hydro_99"/>
    <property type="match status" value="1"/>
</dbReference>
<reference key="1">
    <citation type="journal article" date="2004" name="Nat. Genet.">
        <title>Complete sequencing and characterization of 21,243 full-length human cDNAs.</title>
        <authorList>
            <person name="Ota T."/>
            <person name="Suzuki Y."/>
            <person name="Nishikawa T."/>
            <person name="Otsuki T."/>
            <person name="Sugiyama T."/>
            <person name="Irie R."/>
            <person name="Wakamatsu A."/>
            <person name="Hayashi K."/>
            <person name="Sato H."/>
            <person name="Nagai K."/>
            <person name="Kimura K."/>
            <person name="Makita H."/>
            <person name="Sekine M."/>
            <person name="Obayashi M."/>
            <person name="Nishi T."/>
            <person name="Shibahara T."/>
            <person name="Tanaka T."/>
            <person name="Ishii S."/>
            <person name="Yamamoto J."/>
            <person name="Saito K."/>
            <person name="Kawai Y."/>
            <person name="Isono Y."/>
            <person name="Nakamura Y."/>
            <person name="Nagahari K."/>
            <person name="Murakami K."/>
            <person name="Yasuda T."/>
            <person name="Iwayanagi T."/>
            <person name="Wagatsuma M."/>
            <person name="Shiratori A."/>
            <person name="Sudo H."/>
            <person name="Hosoiri T."/>
            <person name="Kaku Y."/>
            <person name="Kodaira H."/>
            <person name="Kondo H."/>
            <person name="Sugawara M."/>
            <person name="Takahashi M."/>
            <person name="Kanda K."/>
            <person name="Yokoi T."/>
            <person name="Furuya T."/>
            <person name="Kikkawa E."/>
            <person name="Omura Y."/>
            <person name="Abe K."/>
            <person name="Kamihara K."/>
            <person name="Katsuta N."/>
            <person name="Sato K."/>
            <person name="Tanikawa M."/>
            <person name="Yamazaki M."/>
            <person name="Ninomiya K."/>
            <person name="Ishibashi T."/>
            <person name="Yamashita H."/>
            <person name="Murakawa K."/>
            <person name="Fujimori K."/>
            <person name="Tanai H."/>
            <person name="Kimata M."/>
            <person name="Watanabe M."/>
            <person name="Hiraoka S."/>
            <person name="Chiba Y."/>
            <person name="Ishida S."/>
            <person name="Ono Y."/>
            <person name="Takiguchi S."/>
            <person name="Watanabe S."/>
            <person name="Yosida M."/>
            <person name="Hotuta T."/>
            <person name="Kusano J."/>
            <person name="Kanehori K."/>
            <person name="Takahashi-Fujii A."/>
            <person name="Hara H."/>
            <person name="Tanase T.-O."/>
            <person name="Nomura Y."/>
            <person name="Togiya S."/>
            <person name="Komai F."/>
            <person name="Hara R."/>
            <person name="Takeuchi K."/>
            <person name="Arita M."/>
            <person name="Imose N."/>
            <person name="Musashino K."/>
            <person name="Yuuki H."/>
            <person name="Oshima A."/>
            <person name="Sasaki N."/>
            <person name="Aotsuka S."/>
            <person name="Yoshikawa Y."/>
            <person name="Matsunawa H."/>
            <person name="Ichihara T."/>
            <person name="Shiohata N."/>
            <person name="Sano S."/>
            <person name="Moriya S."/>
            <person name="Momiyama H."/>
            <person name="Satoh N."/>
            <person name="Takami S."/>
            <person name="Terashima Y."/>
            <person name="Suzuki O."/>
            <person name="Nakagawa S."/>
            <person name="Senoh A."/>
            <person name="Mizoguchi H."/>
            <person name="Goto Y."/>
            <person name="Shimizu F."/>
            <person name="Wakebe H."/>
            <person name="Hishigaki H."/>
            <person name="Watanabe T."/>
            <person name="Sugiyama A."/>
            <person name="Takemoto M."/>
            <person name="Kawakami B."/>
            <person name="Yamazaki M."/>
            <person name="Watanabe K."/>
            <person name="Kumagai A."/>
            <person name="Itakura S."/>
            <person name="Fukuzumi Y."/>
            <person name="Fujimori Y."/>
            <person name="Komiyama M."/>
            <person name="Tashiro H."/>
            <person name="Tanigami A."/>
            <person name="Fujiwara T."/>
            <person name="Ono T."/>
            <person name="Yamada K."/>
            <person name="Fujii Y."/>
            <person name="Ozaki K."/>
            <person name="Hirao M."/>
            <person name="Ohmori Y."/>
            <person name="Kawabata A."/>
            <person name="Hikiji T."/>
            <person name="Kobatake N."/>
            <person name="Inagaki H."/>
            <person name="Ikema Y."/>
            <person name="Okamoto S."/>
            <person name="Okitani R."/>
            <person name="Kawakami T."/>
            <person name="Noguchi S."/>
            <person name="Itoh T."/>
            <person name="Shigeta K."/>
            <person name="Senba T."/>
            <person name="Matsumura K."/>
            <person name="Nakajima Y."/>
            <person name="Mizuno T."/>
            <person name="Morinaga M."/>
            <person name="Sasaki M."/>
            <person name="Togashi T."/>
            <person name="Oyama M."/>
            <person name="Hata H."/>
            <person name="Watanabe M."/>
            <person name="Komatsu T."/>
            <person name="Mizushima-Sugano J."/>
            <person name="Satoh T."/>
            <person name="Shirai Y."/>
            <person name="Takahashi Y."/>
            <person name="Nakagawa K."/>
            <person name="Okumura K."/>
            <person name="Nagase T."/>
            <person name="Nomura N."/>
            <person name="Kikuchi H."/>
            <person name="Masuho Y."/>
            <person name="Yamashita R."/>
            <person name="Nakai K."/>
            <person name="Yada T."/>
            <person name="Nakamura Y."/>
            <person name="Ohara O."/>
            <person name="Isogai T."/>
            <person name="Sugano S."/>
        </authorList>
    </citation>
    <scope>NUCLEOTIDE SEQUENCE [LARGE SCALE MRNA] (ISOFORM 2)</scope>
</reference>
<reference key="2">
    <citation type="journal article" date="2006" name="Nature">
        <title>The DNA sequence and biological annotation of human chromosome 1.</title>
        <authorList>
            <person name="Gregory S.G."/>
            <person name="Barlow K.F."/>
            <person name="McLay K.E."/>
            <person name="Kaul R."/>
            <person name="Swarbreck D."/>
            <person name="Dunham A."/>
            <person name="Scott C.E."/>
            <person name="Howe K.L."/>
            <person name="Woodfine K."/>
            <person name="Spencer C.C.A."/>
            <person name="Jones M.C."/>
            <person name="Gillson C."/>
            <person name="Searle S."/>
            <person name="Zhou Y."/>
            <person name="Kokocinski F."/>
            <person name="McDonald L."/>
            <person name="Evans R."/>
            <person name="Phillips K."/>
            <person name="Atkinson A."/>
            <person name="Cooper R."/>
            <person name="Jones C."/>
            <person name="Hall R.E."/>
            <person name="Andrews T.D."/>
            <person name="Lloyd C."/>
            <person name="Ainscough R."/>
            <person name="Almeida J.P."/>
            <person name="Ambrose K.D."/>
            <person name="Anderson F."/>
            <person name="Andrew R.W."/>
            <person name="Ashwell R.I.S."/>
            <person name="Aubin K."/>
            <person name="Babbage A.K."/>
            <person name="Bagguley C.L."/>
            <person name="Bailey J."/>
            <person name="Beasley H."/>
            <person name="Bethel G."/>
            <person name="Bird C.P."/>
            <person name="Bray-Allen S."/>
            <person name="Brown J.Y."/>
            <person name="Brown A.J."/>
            <person name="Buckley D."/>
            <person name="Burton J."/>
            <person name="Bye J."/>
            <person name="Carder C."/>
            <person name="Chapman J.C."/>
            <person name="Clark S.Y."/>
            <person name="Clarke G."/>
            <person name="Clee C."/>
            <person name="Cobley V."/>
            <person name="Collier R.E."/>
            <person name="Corby N."/>
            <person name="Coville G.J."/>
            <person name="Davies J."/>
            <person name="Deadman R."/>
            <person name="Dunn M."/>
            <person name="Earthrowl M."/>
            <person name="Ellington A.G."/>
            <person name="Errington H."/>
            <person name="Frankish A."/>
            <person name="Frankland J."/>
            <person name="French L."/>
            <person name="Garner P."/>
            <person name="Garnett J."/>
            <person name="Gay L."/>
            <person name="Ghori M.R.J."/>
            <person name="Gibson R."/>
            <person name="Gilby L.M."/>
            <person name="Gillett W."/>
            <person name="Glithero R.J."/>
            <person name="Grafham D.V."/>
            <person name="Griffiths C."/>
            <person name="Griffiths-Jones S."/>
            <person name="Grocock R."/>
            <person name="Hammond S."/>
            <person name="Harrison E.S.I."/>
            <person name="Hart E."/>
            <person name="Haugen E."/>
            <person name="Heath P.D."/>
            <person name="Holmes S."/>
            <person name="Holt K."/>
            <person name="Howden P.J."/>
            <person name="Hunt A.R."/>
            <person name="Hunt S.E."/>
            <person name="Hunter G."/>
            <person name="Isherwood J."/>
            <person name="James R."/>
            <person name="Johnson C."/>
            <person name="Johnson D."/>
            <person name="Joy A."/>
            <person name="Kay M."/>
            <person name="Kershaw J.K."/>
            <person name="Kibukawa M."/>
            <person name="Kimberley A.M."/>
            <person name="King A."/>
            <person name="Knights A.J."/>
            <person name="Lad H."/>
            <person name="Laird G."/>
            <person name="Lawlor S."/>
            <person name="Leongamornlert D.A."/>
            <person name="Lloyd D.M."/>
            <person name="Loveland J."/>
            <person name="Lovell J."/>
            <person name="Lush M.J."/>
            <person name="Lyne R."/>
            <person name="Martin S."/>
            <person name="Mashreghi-Mohammadi M."/>
            <person name="Matthews L."/>
            <person name="Matthews N.S.W."/>
            <person name="McLaren S."/>
            <person name="Milne S."/>
            <person name="Mistry S."/>
            <person name="Moore M.J.F."/>
            <person name="Nickerson T."/>
            <person name="O'Dell C.N."/>
            <person name="Oliver K."/>
            <person name="Palmeiri A."/>
            <person name="Palmer S.A."/>
            <person name="Parker A."/>
            <person name="Patel D."/>
            <person name="Pearce A.V."/>
            <person name="Peck A.I."/>
            <person name="Pelan S."/>
            <person name="Phelps K."/>
            <person name="Phillimore B.J."/>
            <person name="Plumb R."/>
            <person name="Rajan J."/>
            <person name="Raymond C."/>
            <person name="Rouse G."/>
            <person name="Saenphimmachak C."/>
            <person name="Sehra H.K."/>
            <person name="Sheridan E."/>
            <person name="Shownkeen R."/>
            <person name="Sims S."/>
            <person name="Skuce C.D."/>
            <person name="Smith M."/>
            <person name="Steward C."/>
            <person name="Subramanian S."/>
            <person name="Sycamore N."/>
            <person name="Tracey A."/>
            <person name="Tromans A."/>
            <person name="Van Helmond Z."/>
            <person name="Wall M."/>
            <person name="Wallis J.M."/>
            <person name="White S."/>
            <person name="Whitehead S.L."/>
            <person name="Wilkinson J.E."/>
            <person name="Willey D.L."/>
            <person name="Williams H."/>
            <person name="Wilming L."/>
            <person name="Wray P.W."/>
            <person name="Wu Z."/>
            <person name="Coulson A."/>
            <person name="Vaudin M."/>
            <person name="Sulston J.E."/>
            <person name="Durbin R.M."/>
            <person name="Hubbard T."/>
            <person name="Wooster R."/>
            <person name="Dunham I."/>
            <person name="Carter N.P."/>
            <person name="McVean G."/>
            <person name="Ross M.T."/>
            <person name="Harrow J."/>
            <person name="Olson M.V."/>
            <person name="Beck S."/>
            <person name="Rogers J."/>
            <person name="Bentley D.R."/>
        </authorList>
    </citation>
    <scope>NUCLEOTIDE SEQUENCE [LARGE SCALE GENOMIC DNA]</scope>
</reference>
<reference key="3">
    <citation type="journal article" date="2004" name="Genome Res.">
        <title>The status, quality, and expansion of the NIH full-length cDNA project: the Mammalian Gene Collection (MGC).</title>
        <authorList>
            <consortium name="The MGC Project Team"/>
        </authorList>
    </citation>
    <scope>NUCLEOTIDE SEQUENCE [LARGE SCALE MRNA] (ISOFORM 3)</scope>
    <scope>NUCLEOTIDE SEQUENCE [LARGE SCALE MRNA] OF 155-457 (ISOFORM 1)</scope>
    <source>
        <tissue>Brain</tissue>
        <tissue>Prostate</tissue>
        <tissue>Skin</tissue>
    </source>
</reference>
<protein>
    <recommendedName>
        <fullName>Glycoprotein endo-alpha-1,2-mannosidase-like protein</fullName>
        <ecNumber>3.2.1.-</ecNumber>
    </recommendedName>
</protein>
<name>MANEL_HUMAN</name>
<sequence length="457" mass="51317">MARRRRRACIALFLVLLFAFGTLMGLRTLKAPDGLPALGPGLELAPFERRPEGAPAPAARAPAAPAAPPPPPPPPRTADPGGSPGPAPAEAEPAPVQSLRVYSDLHAFYYSWYGSPRREGHYIHWDHVMVPHWDPKISASYPRGRHSPPDDLGSSFYPELGPYSSRDPEVLREHMTQLKEAAIGVLVLSWYPPGMADDNGEPSDDLVPAILDTAHQYSIQVAFHIQPYKGRDDITVHDNIKYIIDTYGSHGAFYRYKNSMGKSLPLFYIYDSYLTSPEAWAHLLTPNGPHSIRNTPYDGVFIALLVEEGHTHDILAAGFDGMYTYFASNGFSFGSSHQNWKAVKNFCDANNLMFIPSVGPGYIDTSIRPWNNHNTRNRVNGKYYETALQAALTVRPEIVSITSFNEWHEGTQIEKAIPKKTPTRLYLDYLPHQPSLYLELTRRWAEHFIKEKEQWLM</sequence>
<accession>Q5VSG8</accession>
<accession>Q6DD86</accession>
<accession>Q6P497</accession>
<accession>Q8N5P8</accession>
<accession>Q96G55</accession>
<accession>Q96N42</accession>
<organism>
    <name type="scientific">Homo sapiens</name>
    <name type="common">Human</name>
    <dbReference type="NCBI Taxonomy" id="9606"/>
    <lineage>
        <taxon>Eukaryota</taxon>
        <taxon>Metazoa</taxon>
        <taxon>Chordata</taxon>
        <taxon>Craniata</taxon>
        <taxon>Vertebrata</taxon>
        <taxon>Euteleostomi</taxon>
        <taxon>Mammalia</taxon>
        <taxon>Eutheria</taxon>
        <taxon>Euarchontoglires</taxon>
        <taxon>Primates</taxon>
        <taxon>Haplorrhini</taxon>
        <taxon>Catarrhini</taxon>
        <taxon>Hominidae</taxon>
        <taxon>Homo</taxon>
    </lineage>
</organism>
<feature type="chain" id="PRO_0000282320" description="Glycoprotein endo-alpha-1,2-mannosidase-like protein">
    <location>
        <begin position="1"/>
        <end position="457"/>
    </location>
</feature>
<feature type="topological domain" description="Cytoplasmic" evidence="2">
    <location>
        <begin position="1"/>
        <end position="8"/>
    </location>
</feature>
<feature type="transmembrane region" description="Helical; Signal-anchor for type II membrane protein" evidence="2">
    <location>
        <begin position="9"/>
        <end position="29"/>
    </location>
</feature>
<feature type="topological domain" description="Lumenal" evidence="2">
    <location>
        <begin position="30"/>
        <end position="457"/>
    </location>
</feature>
<feature type="region of interest" description="Disordered" evidence="3">
    <location>
        <begin position="46"/>
        <end position="93"/>
    </location>
</feature>
<feature type="compositionally biased region" description="Low complexity" evidence="3">
    <location>
        <begin position="53"/>
        <end position="64"/>
    </location>
</feature>
<feature type="compositionally biased region" description="Pro residues" evidence="3">
    <location>
        <begin position="65"/>
        <end position="87"/>
    </location>
</feature>
<feature type="splice variant" id="VSP_024116" description="In isoform 2." evidence="4">
    <location>
        <begin position="1"/>
        <end position="222"/>
    </location>
</feature>
<feature type="splice variant" id="VSP_024117" description="In isoform 2." evidence="4">
    <original>FHIQPYKGRDDITVHDNIKYIIDT</original>
    <variation>MITGSPQMTWCPPFWTPPISTASR</variation>
    <location>
        <begin position="223"/>
        <end position="246"/>
    </location>
</feature>
<feature type="splice variant" id="VSP_024118" description="In isoform 3." evidence="5">
    <original>YGSH</original>
    <variation>TGKL</variation>
    <location>
        <begin position="247"/>
        <end position="250"/>
    </location>
</feature>
<feature type="splice variant" id="VSP_024119" description="In isoform 3." evidence="5">
    <location>
        <begin position="251"/>
        <end position="457"/>
    </location>
</feature>
<keyword id="KW-0025">Alternative splicing</keyword>
<keyword id="KW-0333">Golgi apparatus</keyword>
<keyword id="KW-0378">Hydrolase</keyword>
<keyword id="KW-0472">Membrane</keyword>
<keyword id="KW-1267">Proteomics identification</keyword>
<keyword id="KW-1185">Reference proteome</keyword>
<keyword id="KW-0735">Signal-anchor</keyword>
<keyword id="KW-0812">Transmembrane</keyword>
<keyword id="KW-1133">Transmembrane helix</keyword>